<sequence>MAPAKKGGEKKKGRSAINEVVTREYTINIHKRIHGIGFKKRAPRALKEIRKFAVKEMRTPDVRIDTRLNKAVWAKGIRNVPYRIRVRLSRKRNEDEDSPNKLYTLVTYVPVTNYKGLQTVNVDEN</sequence>
<name>RL31_XENLA</name>
<feature type="chain" id="PRO_0000153767" description="Large ribosomal subunit protein eL31">
    <location>
        <begin position="1"/>
        <end position="125"/>
    </location>
</feature>
<protein>
    <recommendedName>
        <fullName evidence="2">Large ribosomal subunit protein eL31</fullName>
    </recommendedName>
    <alternativeName>
        <fullName>60S ribosomal protein L31</fullName>
    </alternativeName>
</protein>
<gene>
    <name type="primary">rpl31</name>
</gene>
<evidence type="ECO:0000250" key="1">
    <source>
        <dbReference type="UniProtKB" id="P62899"/>
    </source>
</evidence>
<evidence type="ECO:0000305" key="2"/>
<reference key="1">
    <citation type="submission" date="2004-04" db="EMBL/GenBank/DDBJ databases">
        <authorList>
            <consortium name="NIH - Xenopus Gene Collection (XGC) project"/>
        </authorList>
    </citation>
    <scope>NUCLEOTIDE SEQUENCE [LARGE SCALE MRNA]</scope>
    <source>
        <tissue>Embryo</tissue>
    </source>
</reference>
<accession>Q6NUH0</accession>
<organism>
    <name type="scientific">Xenopus laevis</name>
    <name type="common">African clawed frog</name>
    <dbReference type="NCBI Taxonomy" id="8355"/>
    <lineage>
        <taxon>Eukaryota</taxon>
        <taxon>Metazoa</taxon>
        <taxon>Chordata</taxon>
        <taxon>Craniata</taxon>
        <taxon>Vertebrata</taxon>
        <taxon>Euteleostomi</taxon>
        <taxon>Amphibia</taxon>
        <taxon>Batrachia</taxon>
        <taxon>Anura</taxon>
        <taxon>Pipoidea</taxon>
        <taxon>Pipidae</taxon>
        <taxon>Xenopodinae</taxon>
        <taxon>Xenopus</taxon>
        <taxon>Xenopus</taxon>
    </lineage>
</organism>
<keyword id="KW-0002">3D-structure</keyword>
<keyword id="KW-0963">Cytoplasm</keyword>
<keyword id="KW-1185">Reference proteome</keyword>
<keyword id="KW-0687">Ribonucleoprotein</keyword>
<keyword id="KW-0689">Ribosomal protein</keyword>
<dbReference type="EMBL" id="BC068617">
    <property type="protein sequence ID" value="AAH68617.1"/>
    <property type="molecule type" value="mRNA"/>
</dbReference>
<dbReference type="RefSeq" id="NP_001084710.1">
    <property type="nucleotide sequence ID" value="NM_001091241.1"/>
</dbReference>
<dbReference type="RefSeq" id="XP_018102551.1">
    <property type="nucleotide sequence ID" value="XM_018247062.1"/>
</dbReference>
<dbReference type="RefSeq" id="XP_018103661.1">
    <property type="nucleotide sequence ID" value="XM_018248172.1"/>
</dbReference>
<dbReference type="RefSeq" id="XP_018103662.1">
    <property type="nucleotide sequence ID" value="XM_018248173.1"/>
</dbReference>
<dbReference type="PDB" id="7OYC">
    <property type="method" value="EM"/>
    <property type="resolution" value="2.40 A"/>
    <property type="chains" value="d1=1-125"/>
</dbReference>
<dbReference type="PDBsum" id="7OYC"/>
<dbReference type="EMDB" id="EMD-13113"/>
<dbReference type="SMR" id="Q6NUH0"/>
<dbReference type="BioGRID" id="101094">
    <property type="interactions" value="2"/>
</dbReference>
<dbReference type="IntAct" id="Q6NUH0">
    <property type="interactions" value="1"/>
</dbReference>
<dbReference type="DNASU" id="414672"/>
<dbReference type="GeneID" id="414672"/>
<dbReference type="KEGG" id="xla:108708398"/>
<dbReference type="KEGG" id="xla:414672"/>
<dbReference type="AGR" id="Xenbase:XB-GENE-1001971"/>
<dbReference type="CTD" id="108708398"/>
<dbReference type="CTD" id="414672"/>
<dbReference type="Xenbase" id="XB-GENE-1001971">
    <property type="gene designation" value="rpl31.S"/>
</dbReference>
<dbReference type="OrthoDB" id="9739313at2759"/>
<dbReference type="CD-CODE" id="78E86D56">
    <property type="entry name" value="Mitochondrial cloud"/>
</dbReference>
<dbReference type="Proteomes" id="UP000186698">
    <property type="component" value="Chromosome 2L"/>
</dbReference>
<dbReference type="Proteomes" id="UP000186698">
    <property type="component" value="Chromosome 2S"/>
</dbReference>
<dbReference type="Bgee" id="108708398">
    <property type="expression patterns" value="Expressed in internal ear and 19 other cell types or tissues"/>
</dbReference>
<dbReference type="GO" id="GO:0022625">
    <property type="term" value="C:cytosolic large ribosomal subunit"/>
    <property type="evidence" value="ECO:0000318"/>
    <property type="project" value="GO_Central"/>
</dbReference>
<dbReference type="GO" id="GO:0003735">
    <property type="term" value="F:structural constituent of ribosome"/>
    <property type="evidence" value="ECO:0000318"/>
    <property type="project" value="GO_Central"/>
</dbReference>
<dbReference type="GO" id="GO:0002181">
    <property type="term" value="P:cytoplasmic translation"/>
    <property type="evidence" value="ECO:0000318"/>
    <property type="project" value="GO_Central"/>
</dbReference>
<dbReference type="CDD" id="cd00463">
    <property type="entry name" value="Ribosomal_L31e"/>
    <property type="match status" value="1"/>
</dbReference>
<dbReference type="FunFam" id="3.10.440.10:FF:000001">
    <property type="entry name" value="60S ribosomal protein L31"/>
    <property type="match status" value="1"/>
</dbReference>
<dbReference type="Gene3D" id="3.10.440.10">
    <property type="match status" value="1"/>
</dbReference>
<dbReference type="InterPro" id="IPR000054">
    <property type="entry name" value="Ribosomal_eL31"/>
</dbReference>
<dbReference type="InterPro" id="IPR020052">
    <property type="entry name" value="Ribosomal_eL31_CS"/>
</dbReference>
<dbReference type="InterPro" id="IPR023621">
    <property type="entry name" value="Ribosomal_eL31_dom_sf"/>
</dbReference>
<dbReference type="PANTHER" id="PTHR10956">
    <property type="entry name" value="60S RIBOSOMAL PROTEIN L31"/>
    <property type="match status" value="1"/>
</dbReference>
<dbReference type="PANTHER" id="PTHR10956:SF0">
    <property type="entry name" value="60S RIBOSOMAL PROTEIN L31"/>
    <property type="match status" value="1"/>
</dbReference>
<dbReference type="Pfam" id="PF01198">
    <property type="entry name" value="Ribosomal_L31e"/>
    <property type="match status" value="1"/>
</dbReference>
<dbReference type="SMART" id="SM01380">
    <property type="entry name" value="Ribosomal_L31e"/>
    <property type="match status" value="1"/>
</dbReference>
<dbReference type="SUPFAM" id="SSF54575">
    <property type="entry name" value="Ribosomal protein L31e"/>
    <property type="match status" value="1"/>
</dbReference>
<dbReference type="PROSITE" id="PS01144">
    <property type="entry name" value="RIBOSOMAL_L31E"/>
    <property type="match status" value="1"/>
</dbReference>
<comment type="function">
    <text evidence="1">Component of the large ribosomal subunit. The ribosome is a large ribonucleoprotein complex responsible for the synthesis of proteins in the cell.</text>
</comment>
<comment type="subunit">
    <text evidence="1">Component of the large ribosomal subunit.</text>
</comment>
<comment type="subcellular location">
    <subcellularLocation>
        <location evidence="1">Cytoplasm</location>
    </subcellularLocation>
</comment>
<comment type="similarity">
    <text evidence="2">Belongs to the eukaryotic ribosomal protein eL31 family.</text>
</comment>
<proteinExistence type="evidence at protein level"/>